<protein>
    <recommendedName>
        <fullName evidence="3">Secretin GspD</fullName>
    </recommendedName>
    <alternativeName>
        <fullName>Cholera toxin secretion protein EpsD</fullName>
    </alternativeName>
    <alternativeName>
        <fullName>General secretion pathway protein D</fullName>
        <shortName>GspD</shortName>
    </alternativeName>
    <alternativeName>
        <fullName>Type II secretion system protein D</fullName>
        <shortName>T2SS protein D</shortName>
    </alternativeName>
</protein>
<dbReference type="EMBL" id="L33796">
    <property type="protein sequence ID" value="AAA58785.1"/>
    <property type="molecule type" value="Genomic_DNA"/>
</dbReference>
<dbReference type="EMBL" id="AE003852">
    <property type="status" value="NOT_ANNOTATED_CDS"/>
    <property type="molecule type" value="Genomic_DNA"/>
</dbReference>
<dbReference type="PDB" id="5WQ8">
    <property type="method" value="EM"/>
    <property type="resolution" value="3.26 A"/>
    <property type="chains" value="A/B/C/D/E/F/G/H/I/J/K/L/M/N/O=25-674"/>
</dbReference>
<dbReference type="PDB" id="5WQ9">
    <property type="method" value="EM"/>
    <property type="resolution" value="4.22 A"/>
    <property type="chains" value="A/B/C/D/E/F/G/H/I/J/K/L/M/N/O=25-674"/>
</dbReference>
<dbReference type="PDBsum" id="5WQ8"/>
<dbReference type="PDBsum" id="5WQ9"/>
<dbReference type="EMDB" id="EMD-6676"/>
<dbReference type="EMDB" id="EMD-6677"/>
<dbReference type="SMR" id="P45779"/>
<dbReference type="DIP" id="DIP-59035N"/>
<dbReference type="Proteomes" id="UP000000584">
    <property type="component" value="Chromosome 1"/>
</dbReference>
<dbReference type="GO" id="GO:0009279">
    <property type="term" value="C:cell outer membrane"/>
    <property type="evidence" value="ECO:0007669"/>
    <property type="project" value="UniProtKB-SubCell"/>
</dbReference>
<dbReference type="GO" id="GO:0015627">
    <property type="term" value="C:type II protein secretion system complex"/>
    <property type="evidence" value="ECO:0000318"/>
    <property type="project" value="GO_Central"/>
</dbReference>
<dbReference type="GO" id="GO:0042802">
    <property type="term" value="F:identical protein binding"/>
    <property type="evidence" value="ECO:0000353"/>
    <property type="project" value="IntAct"/>
</dbReference>
<dbReference type="GO" id="GO:0009306">
    <property type="term" value="P:protein secretion"/>
    <property type="evidence" value="ECO:0000318"/>
    <property type="project" value="GO_Central"/>
</dbReference>
<dbReference type="GO" id="GO:0015628">
    <property type="term" value="P:protein secretion by the type II secretion system"/>
    <property type="evidence" value="ECO:0007669"/>
    <property type="project" value="InterPro"/>
</dbReference>
<dbReference type="FunFam" id="3.30.1370.120:FF:000002">
    <property type="entry name" value="General secretion pathway protein D"/>
    <property type="match status" value="1"/>
</dbReference>
<dbReference type="FunFam" id="3.30.1370.120:FF:000012">
    <property type="entry name" value="Secretin GspD"/>
    <property type="match status" value="1"/>
</dbReference>
<dbReference type="Gene3D" id="3.30.1370.120">
    <property type="match status" value="3"/>
</dbReference>
<dbReference type="InterPro" id="IPR050810">
    <property type="entry name" value="Bact_Secretion_Sys_Channel"/>
</dbReference>
<dbReference type="InterPro" id="IPR049371">
    <property type="entry name" value="GspD-like_N0"/>
</dbReference>
<dbReference type="InterPro" id="IPR001775">
    <property type="entry name" value="GspD/PilQ"/>
</dbReference>
<dbReference type="InterPro" id="IPR005644">
    <property type="entry name" value="NolW-like"/>
</dbReference>
<dbReference type="InterPro" id="IPR038591">
    <property type="entry name" value="NolW-like_sf"/>
</dbReference>
<dbReference type="InterPro" id="IPR004846">
    <property type="entry name" value="T2SS/T3SS_dom"/>
</dbReference>
<dbReference type="InterPro" id="IPR013356">
    <property type="entry name" value="T2SS_GspD"/>
</dbReference>
<dbReference type="InterPro" id="IPR004845">
    <property type="entry name" value="T2SS_GspD_CS"/>
</dbReference>
<dbReference type="NCBIfam" id="TIGR02517">
    <property type="entry name" value="type_II_gspD"/>
    <property type="match status" value="1"/>
</dbReference>
<dbReference type="PANTHER" id="PTHR30332">
    <property type="entry name" value="PROBABLE GENERAL SECRETION PATHWAY PROTEIN D"/>
    <property type="match status" value="1"/>
</dbReference>
<dbReference type="PANTHER" id="PTHR30332:SF24">
    <property type="entry name" value="SECRETIN GSPD-RELATED"/>
    <property type="match status" value="1"/>
</dbReference>
<dbReference type="Pfam" id="PF00263">
    <property type="entry name" value="Secretin"/>
    <property type="match status" value="1"/>
</dbReference>
<dbReference type="Pfam" id="PF03958">
    <property type="entry name" value="Secretin_N"/>
    <property type="match status" value="3"/>
</dbReference>
<dbReference type="Pfam" id="PF21305">
    <property type="entry name" value="type_II_gspD_N0"/>
    <property type="match status" value="1"/>
</dbReference>
<dbReference type="PRINTS" id="PR00811">
    <property type="entry name" value="BCTERIALGSPD"/>
</dbReference>
<dbReference type="PRINTS" id="PR01032">
    <property type="entry name" value="PHAGEIV"/>
</dbReference>
<dbReference type="PROSITE" id="PS00875">
    <property type="entry name" value="T2SP_D"/>
    <property type="match status" value="1"/>
</dbReference>
<proteinExistence type="evidence at protein level"/>
<name>GSPD_VIBCH</name>
<sequence>MKYWLKKSSWLLAGSLLSTPLAMANEFSASFKGTDIQEFINIVGRNLEKTIIVDPSVRGKVDVRSFDTLNEEQYYSFFLSVLEVYGFAVVEMDNGVLKVIKSKDAKTSAIPVLSGEERANGDEVITQVVAVKNVSVRELSPLLRQLIDNAGAGNVVHYDPANIILITGRAAVVNRLAEIIRRVDQAGDKEIEVVELNNASAAEMVRIVEALNKTTDAQNTPEFLKPKFVADERTNSILISGDPKVRERLKRLIKQLDVEMAAKGNNRVVYLKYAKAEDLVEVLKGVSENLQAEKGTGQPTTSKRNEVMIAAHADTNSLVLTAPQDIMNAMLEVIGQLDIRRAQVLIEALIVEMAEGDGINLGVQWGSLESGSVIQYGNTGASIGNVMIGLEEAKDTTQTKAVYDTNNNFLRNETTTTKGDYTKLASALSSIQGAAVSIAMGDWTALINAVSNDSSSNILSSPSITVMDNGEASFIVGEEVPVITGSTAGSNNDNPFQTVDRKEVGIKLKVVPQINEGNSVQLNIEQEVSNVLGANGAVDVRFAKRQLNTSVMVQDGQMLVLGGLIDERALESESKVPLLGDIPLLGQLFRSTSSQVEKKNLMVFIKPTIIRDGVTADGITQRKYNYIRAEQLFRAEKGLRLLDDASVPVLPKFGDDRRHSPEIQAFIEQMEAKQ</sequence>
<gene>
    <name type="primary">epsD</name>
    <name type="ordered locus">VC_2733</name>
</gene>
<reference key="1">
    <citation type="thesis" date="1994" institute="Michigan State University" country="United States">
        <title>Organization of the general secretion pathway genes in Vibrio cholerae.</title>
        <authorList>
            <person name="Overbye L.J."/>
        </authorList>
    </citation>
    <scope>NUCLEOTIDE SEQUENCE [GENOMIC DNA]</scope>
    <source>
        <strain>El Tor TRH7000</strain>
    </source>
</reference>
<reference key="2">
    <citation type="journal article" date="2000" name="Nature">
        <title>DNA sequence of both chromosomes of the cholera pathogen Vibrio cholerae.</title>
        <authorList>
            <person name="Heidelberg J.F."/>
            <person name="Eisen J.A."/>
            <person name="Nelson W.C."/>
            <person name="Clayton R.A."/>
            <person name="Gwinn M.L."/>
            <person name="Dodson R.J."/>
            <person name="Haft D.H."/>
            <person name="Hickey E.K."/>
            <person name="Peterson J.D."/>
            <person name="Umayam L.A."/>
            <person name="Gill S.R."/>
            <person name="Nelson K.E."/>
            <person name="Read T.D."/>
            <person name="Tettelin H."/>
            <person name="Richardson D.L."/>
            <person name="Ermolaeva M.D."/>
            <person name="Vamathevan J.J."/>
            <person name="Bass S."/>
            <person name="Qin H."/>
            <person name="Dragoi I."/>
            <person name="Sellers P."/>
            <person name="McDonald L.A."/>
            <person name="Utterback T.R."/>
            <person name="Fleischmann R.D."/>
            <person name="Nierman W.C."/>
            <person name="White O."/>
            <person name="Salzberg S.L."/>
            <person name="Smith H.O."/>
            <person name="Colwell R.R."/>
            <person name="Mekalanos J.J."/>
            <person name="Venter J.C."/>
            <person name="Fraser C.M."/>
        </authorList>
    </citation>
    <scope>NUCLEOTIDE SEQUENCE [LARGE SCALE GENOMIC DNA]</scope>
    <source>
        <strain>ATCC 39315 / El Tor Inaba N16961</strain>
    </source>
</reference>
<reference evidence="6 7" key="3">
    <citation type="journal article" date="2017" name="Nat. Struct. Mol. Biol.">
        <title>Structural insights into the secretin translocation channel in the type II secretion system.</title>
        <authorList>
            <person name="Yan Z."/>
            <person name="Yin M."/>
            <person name="Xu D."/>
            <person name="Zhu Y."/>
            <person name="Li X."/>
        </authorList>
    </citation>
    <scope>STRUCTURE BY ELECTRON MICROSCOPY (3.26 ANGSTROMS) OF 25-674</scope>
    <scope>FUNCTION</scope>
    <scope>SUBCELLULAR LOCATION</scope>
    <scope>DOMAIN</scope>
    <scope>MUTAGENESIS OF 395-ASP--THR-417; GLY-477; GLY-505; LEU-508; VAL-510; LEU-522; ILE-524 AND ILE-605</scope>
</reference>
<comment type="function">
    <text evidence="5">Involved in a type II secretion system (T2SS, formerly general secretion pathway, GSP) for the export of proteins. Required for secretion of cholera toxin through the outer membrane. This subunit forms the outer membrane channel.</text>
</comment>
<comment type="subunit">
    <text evidence="2">Forms a cylindrical channel with 15 subunits; unlike E.coli no 16-subunit channels are seen. The closed pentadeacameric channels are 195 Angstroms long and 145 Angstroms in diameter. Each subunit turns in a clock-wise manner around the channel.</text>
</comment>
<comment type="interaction">
    <interactant intactId="EBI-6449570">
        <id>P45779</id>
    </interactant>
    <interactant intactId="EBI-6449570">
        <id>P45779</id>
        <label>epsD</label>
    </interactant>
    <organismsDiffer>false</organismsDiffer>
    <experiments>17</experiments>
</comment>
<comment type="subcellular location">
    <subcellularLocation>
        <location evidence="5">Cell outer membrane</location>
    </subcellularLocation>
    <text evidence="5">Most of the protein is in the periplasm which it traverses to contact proteins of the cell inner membrane.</text>
</comment>
<comment type="domain">
    <text evidence="5">The N0, N1, N2 and N3 domains are periplasmic, while the secretin and S domains form a channel that is partially inserted in the outer membrane. The cap gate extends out on the extracellular side of the channel partially closing the channel. The secretin domain forms a double beta-barrel structure; the outer barrel has an outer diameter of about 110 Angstroms while the inner barrel forms the central gate with a small pore in the closed state.</text>
</comment>
<comment type="similarity">
    <text evidence="4">Belongs to the bacterial secretin family. GSP D subfamily.</text>
</comment>
<comment type="sequence caution" evidence="4">
    <conflict type="frameshift">
        <sequence resource="EMBL" id="AE003852"/>
    </conflict>
    <text>This may be a natural frameshift.</text>
</comment>
<organism>
    <name type="scientific">Vibrio cholerae serotype O1 (strain ATCC 39315 / El Tor Inaba N16961)</name>
    <dbReference type="NCBI Taxonomy" id="243277"/>
    <lineage>
        <taxon>Bacteria</taxon>
        <taxon>Pseudomonadati</taxon>
        <taxon>Pseudomonadota</taxon>
        <taxon>Gammaproteobacteria</taxon>
        <taxon>Vibrionales</taxon>
        <taxon>Vibrionaceae</taxon>
        <taxon>Vibrio</taxon>
    </lineage>
</organism>
<keyword id="KW-0002">3D-structure</keyword>
<keyword id="KW-0998">Cell outer membrane</keyword>
<keyword id="KW-0472">Membrane</keyword>
<keyword id="KW-0653">Protein transport</keyword>
<keyword id="KW-1185">Reference proteome</keyword>
<keyword id="KW-0732">Signal</keyword>
<keyword id="KW-0812">Transmembrane</keyword>
<keyword id="KW-1134">Transmembrane beta strand</keyword>
<keyword id="KW-0813">Transport</keyword>
<feature type="signal peptide" evidence="1">
    <location>
        <begin position="1"/>
        <end position="24"/>
    </location>
</feature>
<feature type="chain" id="PRO_0000013105" description="Secretin GspD">
    <location>
        <begin position="25"/>
        <end position="674"/>
    </location>
</feature>
<feature type="region of interest" description="N0" evidence="5">
    <location>
        <begin position="25"/>
        <end position="121"/>
    </location>
</feature>
<feature type="region of interest" description="N1" evidence="5">
    <location>
        <begin position="123"/>
        <end position="187"/>
    </location>
</feature>
<feature type="region of interest" description="N2" evidence="5">
    <location>
        <begin position="188"/>
        <end position="261"/>
    </location>
</feature>
<feature type="region of interest" description="N3" evidence="5">
    <location>
        <begin position="264"/>
        <end position="338"/>
    </location>
</feature>
<feature type="region of interest" description="Secretin" evidence="5">
    <location>
        <begin position="343"/>
        <end position="612"/>
    </location>
</feature>
<feature type="region of interest" description="Cap gate" evidence="5">
    <location>
        <begin position="395"/>
        <end position="417"/>
    </location>
</feature>
<feature type="region of interest" description="S domain" evidence="5">
    <location>
        <begin position="614"/>
        <end position="674"/>
    </location>
</feature>
<feature type="site" description="May serve as a pivot that allows opening of the central gate for substrate egress" evidence="5">
    <location>
        <position position="477"/>
    </location>
</feature>
<feature type="mutagenesis site" description="Complex resembles E.coli." evidence="2">
    <location>
        <begin position="395"/>
        <end position="417"/>
    </location>
</feature>
<feature type="mutagenesis site" description="Decreased complex assembly; complex is partially open." evidence="2">
    <original>G</original>
    <variation>A</variation>
    <location>
        <position position="477"/>
    </location>
</feature>
<feature type="mutagenesis site" description="No complex assembly." evidence="2">
    <original>G</original>
    <variation>A</variation>
    <location>
        <position position="505"/>
    </location>
</feature>
<feature type="mutagenesis site" description="No complex assembly." evidence="2">
    <original>L</original>
    <variation>D</variation>
    <location>
        <position position="508"/>
    </location>
</feature>
<feature type="mutagenesis site" description="No complex assembly." evidence="2">
    <original>V</original>
    <variation>D</variation>
    <location>
        <position position="510"/>
    </location>
</feature>
<feature type="mutagenesis site" description="No complex assembly." evidence="2">
    <original>L</original>
    <variation>D</variation>
    <location>
        <position position="522"/>
    </location>
</feature>
<feature type="mutagenesis site" description="No complex assembly." evidence="2">
    <original>I</original>
    <variation>E</variation>
    <location>
        <position position="524"/>
    </location>
</feature>
<feature type="mutagenesis site" description="No complex assembly." evidence="2">
    <original>I</original>
    <variation>E</variation>
    <location>
        <position position="605"/>
    </location>
</feature>
<feature type="sequence conflict" description="In Ref. 1; AAA58785." evidence="4" ref="1">
    <original>V</original>
    <variation>A</variation>
    <location>
        <position position="89"/>
    </location>
</feature>
<feature type="sequence conflict" description="In Ref. 1; AAA58785." evidence="4" ref="1">
    <original>R</original>
    <variation>P</variation>
    <location>
        <position position="144"/>
    </location>
</feature>
<feature type="strand" evidence="8">
    <location>
        <begin position="124"/>
        <end position="128"/>
    </location>
</feature>
<feature type="helix" evidence="8">
    <location>
        <begin position="136"/>
        <end position="139"/>
    </location>
</feature>
<feature type="helix" evidence="8">
    <location>
        <begin position="140"/>
        <end position="149"/>
    </location>
</feature>
<feature type="strand" evidence="8">
    <location>
        <begin position="155"/>
        <end position="159"/>
    </location>
</feature>
<feature type="turn" evidence="8">
    <location>
        <begin position="160"/>
        <end position="162"/>
    </location>
</feature>
<feature type="strand" evidence="8">
    <location>
        <begin position="163"/>
        <end position="169"/>
    </location>
</feature>
<feature type="helix" evidence="8">
    <location>
        <begin position="170"/>
        <end position="184"/>
    </location>
</feature>
<feature type="turn" evidence="8">
    <location>
        <begin position="185"/>
        <end position="187"/>
    </location>
</feature>
<feature type="strand" evidence="8">
    <location>
        <begin position="190"/>
        <end position="195"/>
    </location>
</feature>
<feature type="strand" evidence="8">
    <location>
        <begin position="197"/>
        <end position="199"/>
    </location>
</feature>
<feature type="helix" evidence="8">
    <location>
        <begin position="201"/>
        <end position="209"/>
    </location>
</feature>
<feature type="strand" evidence="8">
    <location>
        <begin position="228"/>
        <end position="231"/>
    </location>
</feature>
<feature type="turn" evidence="8">
    <location>
        <begin position="232"/>
        <end position="235"/>
    </location>
</feature>
<feature type="strand" evidence="8">
    <location>
        <begin position="236"/>
        <end position="241"/>
    </location>
</feature>
<feature type="helix" evidence="8">
    <location>
        <begin position="243"/>
        <end position="255"/>
    </location>
</feature>
<feature type="strand" evidence="8">
    <location>
        <begin position="266"/>
        <end position="270"/>
    </location>
</feature>
<feature type="strand" evidence="8">
    <location>
        <begin position="272"/>
        <end position="274"/>
    </location>
</feature>
<feature type="helix" evidence="8">
    <location>
        <begin position="276"/>
        <end position="287"/>
    </location>
</feature>
<feature type="strand" evidence="8">
    <location>
        <begin position="308"/>
        <end position="312"/>
    </location>
</feature>
<feature type="turn" evidence="8">
    <location>
        <begin position="313"/>
        <end position="316"/>
    </location>
</feature>
<feature type="strand" evidence="8">
    <location>
        <begin position="317"/>
        <end position="321"/>
    </location>
</feature>
<feature type="helix" evidence="8">
    <location>
        <begin position="324"/>
        <end position="337"/>
    </location>
</feature>
<feature type="strand" evidence="8">
    <location>
        <begin position="343"/>
        <end position="367"/>
    </location>
</feature>
<feature type="turn" evidence="8">
    <location>
        <begin position="368"/>
        <end position="371"/>
    </location>
</feature>
<feature type="strand" evidence="8">
    <location>
        <begin position="372"/>
        <end position="375"/>
    </location>
</feature>
<feature type="strand" evidence="8">
    <location>
        <begin position="377"/>
        <end position="381"/>
    </location>
</feature>
<feature type="helix" evidence="8">
    <location>
        <begin position="383"/>
        <end position="393"/>
    </location>
</feature>
<feature type="strand" evidence="8">
    <location>
        <begin position="396"/>
        <end position="401"/>
    </location>
</feature>
<feature type="strand" evidence="8">
    <location>
        <begin position="413"/>
        <end position="417"/>
    </location>
</feature>
<feature type="helix" evidence="8">
    <location>
        <begin position="422"/>
        <end position="428"/>
    </location>
</feature>
<feature type="strand" evidence="8">
    <location>
        <begin position="433"/>
        <end position="440"/>
    </location>
</feature>
<feature type="strand" evidence="8">
    <location>
        <begin position="443"/>
        <end position="467"/>
    </location>
</feature>
<feature type="strand" evidence="8">
    <location>
        <begin position="472"/>
        <end position="482"/>
    </location>
</feature>
<feature type="strand" evidence="8">
    <location>
        <begin position="500"/>
        <end position="514"/>
    </location>
</feature>
<feature type="strand" evidence="8">
    <location>
        <begin position="516"/>
        <end position="518"/>
    </location>
</feature>
<feature type="strand" evidence="8">
    <location>
        <begin position="520"/>
        <end position="532"/>
    </location>
</feature>
<feature type="strand" evidence="8">
    <location>
        <begin position="541"/>
        <end position="553"/>
    </location>
</feature>
<feature type="strand" evidence="8">
    <location>
        <begin position="559"/>
        <end position="575"/>
    </location>
</feature>
<feature type="helix" evidence="8">
    <location>
        <begin position="578"/>
        <end position="581"/>
    </location>
</feature>
<feature type="turn" evidence="8">
    <location>
        <begin position="583"/>
        <end position="585"/>
    </location>
</feature>
<feature type="helix" evidence="8">
    <location>
        <begin position="586"/>
        <end position="589"/>
    </location>
</feature>
<feature type="strand" evidence="8">
    <location>
        <begin position="591"/>
        <end position="606"/>
    </location>
</feature>
<feature type="helix" evidence="8">
    <location>
        <begin position="613"/>
        <end position="636"/>
    </location>
</feature>
<feature type="strand" evidence="8">
    <location>
        <begin position="640"/>
        <end position="642"/>
    </location>
</feature>
<feature type="helix" evidence="8">
    <location>
        <begin position="644"/>
        <end position="646"/>
    </location>
</feature>
<feature type="helix" evidence="8">
    <location>
        <begin position="661"/>
        <end position="669"/>
    </location>
</feature>
<evidence type="ECO:0000255" key="1"/>
<evidence type="ECO:0000269" key="2">
    <source>
    </source>
</evidence>
<evidence type="ECO:0000303" key="3">
    <source>
    </source>
</evidence>
<evidence type="ECO:0000305" key="4"/>
<evidence type="ECO:0000305" key="5">
    <source>
    </source>
</evidence>
<evidence type="ECO:0007744" key="6">
    <source>
        <dbReference type="PDB" id="5WQ8"/>
    </source>
</evidence>
<evidence type="ECO:0007744" key="7">
    <source>
        <dbReference type="PDB" id="5WQ9"/>
    </source>
</evidence>
<evidence type="ECO:0007829" key="8">
    <source>
        <dbReference type="PDB" id="5WQ8"/>
    </source>
</evidence>
<accession>P45779</accession>